<protein>
    <recommendedName>
        <fullName evidence="1">UvrABC system protein A</fullName>
        <shortName evidence="1">UvrA protein</shortName>
    </recommendedName>
    <alternativeName>
        <fullName evidence="1">Excinuclease ABC subunit A</fullName>
    </alternativeName>
</protein>
<comment type="function">
    <text evidence="1">The UvrABC repair system catalyzes the recognition and processing of DNA lesions. UvrA is an ATPase and a DNA-binding protein. A damage recognition complex composed of 2 UvrA and 2 UvrB subunits scans DNA for abnormalities. When the presence of a lesion has been verified by UvrB, the UvrA molecules dissociate.</text>
</comment>
<comment type="subunit">
    <text evidence="1">Forms a heterotetramer with UvrB during the search for lesions.</text>
</comment>
<comment type="subcellular location">
    <subcellularLocation>
        <location evidence="1">Cytoplasm</location>
    </subcellularLocation>
</comment>
<comment type="similarity">
    <text evidence="1">Belongs to the ABC transporter superfamily. UvrA family.</text>
</comment>
<sequence length="942" mass="104048">MQNKIIIHGARAHNLKNIDVEIPRDKLVIVTGLSGSGKSSLAFDTIYAEGQRRYVESLSAYARQFLGNMEKPDVDSIDGLSPAISIDQKTTSKNPRSTVGTVTEINDYLRLLYARVGTPYCINGHGAITASSAEQIVEQVLALPERTRMQILAPIVRRKKGQHKTIFEKIQKDGYVRVRVDGDIFDVTEVPELSKSKMHNIEVVIDRLVNKDGIRSRLFDSVEAALRLGDGYLMIDTMDGNELLFSEHYSCPVCGFTVPELEPRLFSFNAPFGSCPTCDGLGIKLEVDLDLVVPDPSKSLKEGALAPWNPISSNYYPTMLEQAMASFGVDMDTPFEALTEEERDLVLYGSGDREFHFHYVNDFGGERNIDIPFEGVVTNVNRRYHETNSDYTRNVMRGYMNELTCATCHGYRLNDQALCVHVGGEEGPHIGQISELSIADHLQLLEELELTENESTIAKPIVKEIHDRLTFLNNVGLNYLTLSRAAGTLSGGESQRIRLATQIGSNLSGVLYILDEPSIGLHQRDNDRLIESLKKMRDLGNTLIVVEHDEDTMMQADWLIDVGPGAGEFGGEIIASGTPKQVAKNKKSITGQYLSGKKFIPVPLERRSGNGRFIEIKGAAQNNLQSLDVRFPLGKFIAVTGVSGSGKSTLVNSILKKAVAQKLNRNADKPGKYHSISGIEHIERLIDIDQSPIGRTPRSNPATYTGVFDDIRDLFAQTNEAKIRGYKKGRFSFNVKGGRCEACSGDGIIKIEMHFLPDVYVPCEVCHGRRYNSETLEVHYKEKNIAEVLDMTVDDALVFFSAIPKIARKIQTIKDVGLGYVTLGQPATTLSGGEAQRMKLASELHKRSTGKSLYILDEPTTGLHTDDIARLLKVLERFVDDGNTVLVIEHNLDVIKSADHIIDLGPEGGVGGGQIVATGTPEEVAQVKESYTGHYLKVKLQQ</sequence>
<keyword id="KW-0067">ATP-binding</keyword>
<keyword id="KW-0963">Cytoplasm</keyword>
<keyword id="KW-0227">DNA damage</keyword>
<keyword id="KW-0228">DNA excision</keyword>
<keyword id="KW-0234">DNA repair</keyword>
<keyword id="KW-0238">DNA-binding</keyword>
<keyword id="KW-0267">Excision nuclease</keyword>
<keyword id="KW-0479">Metal-binding</keyword>
<keyword id="KW-0547">Nucleotide-binding</keyword>
<keyword id="KW-0677">Repeat</keyword>
<keyword id="KW-0742">SOS response</keyword>
<keyword id="KW-0862">Zinc</keyword>
<keyword id="KW-0863">Zinc-finger</keyword>
<gene>
    <name evidence="1" type="primary">uvrA</name>
    <name type="ordered locus">spyM18_1890</name>
</gene>
<accession>Q8NZJ2</accession>
<evidence type="ECO:0000255" key="1">
    <source>
        <dbReference type="HAMAP-Rule" id="MF_00205"/>
    </source>
</evidence>
<reference key="1">
    <citation type="journal article" date="2002" name="Proc. Natl. Acad. Sci. U.S.A.">
        <title>Genome sequence and comparative microarray analysis of serotype M18 group A Streptococcus strains associated with acute rheumatic fever outbreaks.</title>
        <authorList>
            <person name="Smoot J.C."/>
            <person name="Barbian K.D."/>
            <person name="Van Gompel J.J."/>
            <person name="Smoot L.M."/>
            <person name="Chaussee M.S."/>
            <person name="Sylva G.L."/>
            <person name="Sturdevant D.E."/>
            <person name="Ricklefs S.M."/>
            <person name="Porcella S.F."/>
            <person name="Parkins L.D."/>
            <person name="Beres S.B."/>
            <person name="Campbell D.S."/>
            <person name="Smith T.M."/>
            <person name="Zhang Q."/>
            <person name="Kapur V."/>
            <person name="Daly J.A."/>
            <person name="Veasy L.G."/>
            <person name="Musser J.M."/>
        </authorList>
    </citation>
    <scope>NUCLEOTIDE SEQUENCE [LARGE SCALE GENOMIC DNA]</scope>
    <source>
        <strain>MGAS8232</strain>
    </source>
</reference>
<name>UVRA_STRP8</name>
<proteinExistence type="inferred from homology"/>
<dbReference type="EMBL" id="AE009949">
    <property type="protein sequence ID" value="AAL98394.1"/>
    <property type="molecule type" value="Genomic_DNA"/>
</dbReference>
<dbReference type="RefSeq" id="WP_011018187.1">
    <property type="nucleotide sequence ID" value="NC_003485.1"/>
</dbReference>
<dbReference type="SMR" id="Q8NZJ2"/>
<dbReference type="KEGG" id="spm:spyM18_1890"/>
<dbReference type="HOGENOM" id="CLU_001370_2_1_9"/>
<dbReference type="GO" id="GO:0005737">
    <property type="term" value="C:cytoplasm"/>
    <property type="evidence" value="ECO:0007669"/>
    <property type="project" value="UniProtKB-SubCell"/>
</dbReference>
<dbReference type="GO" id="GO:0009380">
    <property type="term" value="C:excinuclease repair complex"/>
    <property type="evidence" value="ECO:0007669"/>
    <property type="project" value="InterPro"/>
</dbReference>
<dbReference type="GO" id="GO:0005524">
    <property type="term" value="F:ATP binding"/>
    <property type="evidence" value="ECO:0007669"/>
    <property type="project" value="UniProtKB-UniRule"/>
</dbReference>
<dbReference type="GO" id="GO:0016887">
    <property type="term" value="F:ATP hydrolysis activity"/>
    <property type="evidence" value="ECO:0007669"/>
    <property type="project" value="InterPro"/>
</dbReference>
<dbReference type="GO" id="GO:0003677">
    <property type="term" value="F:DNA binding"/>
    <property type="evidence" value="ECO:0007669"/>
    <property type="project" value="UniProtKB-UniRule"/>
</dbReference>
<dbReference type="GO" id="GO:0009381">
    <property type="term" value="F:excinuclease ABC activity"/>
    <property type="evidence" value="ECO:0007669"/>
    <property type="project" value="UniProtKB-UniRule"/>
</dbReference>
<dbReference type="GO" id="GO:0008270">
    <property type="term" value="F:zinc ion binding"/>
    <property type="evidence" value="ECO:0007669"/>
    <property type="project" value="UniProtKB-UniRule"/>
</dbReference>
<dbReference type="GO" id="GO:0006289">
    <property type="term" value="P:nucleotide-excision repair"/>
    <property type="evidence" value="ECO:0007669"/>
    <property type="project" value="UniProtKB-UniRule"/>
</dbReference>
<dbReference type="GO" id="GO:0009432">
    <property type="term" value="P:SOS response"/>
    <property type="evidence" value="ECO:0007669"/>
    <property type="project" value="UniProtKB-UniRule"/>
</dbReference>
<dbReference type="CDD" id="cd03270">
    <property type="entry name" value="ABC_UvrA_I"/>
    <property type="match status" value="1"/>
</dbReference>
<dbReference type="CDD" id="cd03271">
    <property type="entry name" value="ABC_UvrA_II"/>
    <property type="match status" value="1"/>
</dbReference>
<dbReference type="FunFam" id="1.20.1580.10:FF:000002">
    <property type="entry name" value="UvrABC system protein A"/>
    <property type="match status" value="1"/>
</dbReference>
<dbReference type="FunFam" id="3.40.50.300:FF:000028">
    <property type="entry name" value="UvrABC system protein A"/>
    <property type="match status" value="1"/>
</dbReference>
<dbReference type="Gene3D" id="1.10.8.280">
    <property type="entry name" value="ABC transporter ATPase domain-like"/>
    <property type="match status" value="1"/>
</dbReference>
<dbReference type="Gene3D" id="1.20.1580.10">
    <property type="entry name" value="ABC transporter ATPase like domain"/>
    <property type="match status" value="2"/>
</dbReference>
<dbReference type="Gene3D" id="3.30.1490.20">
    <property type="entry name" value="ATP-grasp fold, A domain"/>
    <property type="match status" value="1"/>
</dbReference>
<dbReference type="Gene3D" id="3.40.50.300">
    <property type="entry name" value="P-loop containing nucleotide triphosphate hydrolases"/>
    <property type="match status" value="2"/>
</dbReference>
<dbReference type="HAMAP" id="MF_00205">
    <property type="entry name" value="UvrA"/>
    <property type="match status" value="1"/>
</dbReference>
<dbReference type="InterPro" id="IPR003593">
    <property type="entry name" value="AAA+_ATPase"/>
</dbReference>
<dbReference type="InterPro" id="IPR003439">
    <property type="entry name" value="ABC_transporter-like_ATP-bd"/>
</dbReference>
<dbReference type="InterPro" id="IPR017871">
    <property type="entry name" value="ABC_transporter-like_CS"/>
</dbReference>
<dbReference type="InterPro" id="IPR013815">
    <property type="entry name" value="ATP_grasp_subdomain_1"/>
</dbReference>
<dbReference type="InterPro" id="IPR027417">
    <property type="entry name" value="P-loop_NTPase"/>
</dbReference>
<dbReference type="InterPro" id="IPR004602">
    <property type="entry name" value="UvrA"/>
</dbReference>
<dbReference type="InterPro" id="IPR041552">
    <property type="entry name" value="UvrA_DNA-bd"/>
</dbReference>
<dbReference type="InterPro" id="IPR041102">
    <property type="entry name" value="UvrA_inter"/>
</dbReference>
<dbReference type="NCBIfam" id="NF001503">
    <property type="entry name" value="PRK00349.1"/>
    <property type="match status" value="1"/>
</dbReference>
<dbReference type="NCBIfam" id="TIGR00630">
    <property type="entry name" value="uvra"/>
    <property type="match status" value="1"/>
</dbReference>
<dbReference type="PANTHER" id="PTHR43152">
    <property type="entry name" value="UVRABC SYSTEM PROTEIN A"/>
    <property type="match status" value="1"/>
</dbReference>
<dbReference type="PANTHER" id="PTHR43152:SF3">
    <property type="entry name" value="UVRABC SYSTEM PROTEIN A"/>
    <property type="match status" value="1"/>
</dbReference>
<dbReference type="Pfam" id="PF17755">
    <property type="entry name" value="UvrA_DNA-bind"/>
    <property type="match status" value="1"/>
</dbReference>
<dbReference type="Pfam" id="PF17760">
    <property type="entry name" value="UvrA_inter"/>
    <property type="match status" value="1"/>
</dbReference>
<dbReference type="SMART" id="SM00382">
    <property type="entry name" value="AAA"/>
    <property type="match status" value="1"/>
</dbReference>
<dbReference type="SUPFAM" id="SSF52540">
    <property type="entry name" value="P-loop containing nucleoside triphosphate hydrolases"/>
    <property type="match status" value="2"/>
</dbReference>
<dbReference type="PROSITE" id="PS00211">
    <property type="entry name" value="ABC_TRANSPORTER_1"/>
    <property type="match status" value="2"/>
</dbReference>
<dbReference type="PROSITE" id="PS50893">
    <property type="entry name" value="ABC_TRANSPORTER_2"/>
    <property type="match status" value="2"/>
</dbReference>
<organism>
    <name type="scientific">Streptococcus pyogenes serotype M18 (strain MGAS8232)</name>
    <dbReference type="NCBI Taxonomy" id="186103"/>
    <lineage>
        <taxon>Bacteria</taxon>
        <taxon>Bacillati</taxon>
        <taxon>Bacillota</taxon>
        <taxon>Bacilli</taxon>
        <taxon>Lactobacillales</taxon>
        <taxon>Streptococcaceae</taxon>
        <taxon>Streptococcus</taxon>
    </lineage>
</organism>
<feature type="chain" id="PRO_0000093105" description="UvrABC system protein A">
    <location>
        <begin position="1"/>
        <end position="942"/>
    </location>
</feature>
<feature type="domain" description="ABC transporter 1" evidence="1">
    <location>
        <begin position="308"/>
        <end position="589"/>
    </location>
</feature>
<feature type="domain" description="ABC transporter 2" evidence="1">
    <location>
        <begin position="609"/>
        <end position="937"/>
    </location>
</feature>
<feature type="zinc finger region" description="C4-type" evidence="1">
    <location>
        <begin position="251"/>
        <end position="278"/>
    </location>
</feature>
<feature type="zinc finger region" description="C4-type" evidence="1">
    <location>
        <begin position="740"/>
        <end position="766"/>
    </location>
</feature>
<feature type="binding site" evidence="1">
    <location>
        <begin position="32"/>
        <end position="39"/>
    </location>
    <ligand>
        <name>ATP</name>
        <dbReference type="ChEBI" id="CHEBI:30616"/>
    </ligand>
</feature>
<feature type="binding site" evidence="1">
    <location>
        <begin position="641"/>
        <end position="648"/>
    </location>
    <ligand>
        <name>ATP</name>
        <dbReference type="ChEBI" id="CHEBI:30616"/>
    </ligand>
</feature>